<accession>B2K5Y0</accession>
<name>CSRA_YERPB</name>
<protein>
    <recommendedName>
        <fullName evidence="1">Translational regulator CsrA</fullName>
    </recommendedName>
    <alternativeName>
        <fullName evidence="1">Carbon storage regulator</fullName>
    </alternativeName>
</protein>
<sequence>MLILTRRVGETLMIGDEVTVTVLGVKGNQVRIGVNAPKEVSVHREEIYQRIQAEKSQPTTY</sequence>
<proteinExistence type="inferred from homology"/>
<organism>
    <name type="scientific">Yersinia pseudotuberculosis serotype IB (strain PB1/+)</name>
    <dbReference type="NCBI Taxonomy" id="502801"/>
    <lineage>
        <taxon>Bacteria</taxon>
        <taxon>Pseudomonadati</taxon>
        <taxon>Pseudomonadota</taxon>
        <taxon>Gammaproteobacteria</taxon>
        <taxon>Enterobacterales</taxon>
        <taxon>Yersiniaceae</taxon>
        <taxon>Yersinia</taxon>
    </lineage>
</organism>
<comment type="function">
    <text evidence="1">A key translational regulator that binds mRNA to regulate translation initiation and/or mRNA stability. Mediates global changes in gene expression, shifting from rapid growth to stress survival by linking envelope stress, the stringent response and the catabolite repression systems. Usually binds in the 5'-UTR; binding at or near the Shine-Dalgarno sequence prevents ribosome-binding, repressing translation, binding elsewhere in the 5'-UTR can activate translation and/or stabilize the mRNA. Its function is antagonized by small RNA(s).</text>
</comment>
<comment type="subunit">
    <text evidence="1">Homodimer; the beta-strands of each monomer intercalate to form a hydrophobic core, while the alpha-helices form wings that extend away from the core.</text>
</comment>
<comment type="subcellular location">
    <subcellularLocation>
        <location evidence="1">Cytoplasm</location>
    </subcellularLocation>
</comment>
<comment type="similarity">
    <text evidence="1">Belongs to the CsrA/RsmA family.</text>
</comment>
<keyword id="KW-0010">Activator</keyword>
<keyword id="KW-0963">Cytoplasm</keyword>
<keyword id="KW-0678">Repressor</keyword>
<keyword id="KW-0694">RNA-binding</keyword>
<keyword id="KW-0810">Translation regulation</keyword>
<reference key="1">
    <citation type="submission" date="2008-04" db="EMBL/GenBank/DDBJ databases">
        <title>Complete sequence of Yersinia pseudotuberculosis PB1/+.</title>
        <authorList>
            <person name="Copeland A."/>
            <person name="Lucas S."/>
            <person name="Lapidus A."/>
            <person name="Glavina del Rio T."/>
            <person name="Dalin E."/>
            <person name="Tice H."/>
            <person name="Bruce D."/>
            <person name="Goodwin L."/>
            <person name="Pitluck S."/>
            <person name="Munk A.C."/>
            <person name="Brettin T."/>
            <person name="Detter J.C."/>
            <person name="Han C."/>
            <person name="Tapia R."/>
            <person name="Schmutz J."/>
            <person name="Larimer F."/>
            <person name="Land M."/>
            <person name="Hauser L."/>
            <person name="Challacombe J.F."/>
            <person name="Green L."/>
            <person name="Lindler L.E."/>
            <person name="Nikolich M.P."/>
            <person name="Richardson P."/>
        </authorList>
    </citation>
    <scope>NUCLEOTIDE SEQUENCE [LARGE SCALE GENOMIC DNA]</scope>
    <source>
        <strain>PB1/+</strain>
    </source>
</reference>
<gene>
    <name evidence="1" type="primary">csrA</name>
    <name type="ordered locus">YPTS_0862</name>
</gene>
<evidence type="ECO:0000255" key="1">
    <source>
        <dbReference type="HAMAP-Rule" id="MF_00167"/>
    </source>
</evidence>
<feature type="chain" id="PRO_1000097520" description="Translational regulator CsrA">
    <location>
        <begin position="1"/>
        <end position="61"/>
    </location>
</feature>
<dbReference type="EMBL" id="CP001048">
    <property type="protein sequence ID" value="ACC87846.1"/>
    <property type="molecule type" value="Genomic_DNA"/>
</dbReference>
<dbReference type="RefSeq" id="WP_002209449.1">
    <property type="nucleotide sequence ID" value="NZ_CP009780.1"/>
</dbReference>
<dbReference type="SMR" id="B2K5Y0"/>
<dbReference type="GeneID" id="97457422"/>
<dbReference type="KEGG" id="ypb:YPTS_0862"/>
<dbReference type="PATRIC" id="fig|502801.10.peg.195"/>
<dbReference type="GO" id="GO:0005829">
    <property type="term" value="C:cytosol"/>
    <property type="evidence" value="ECO:0007669"/>
    <property type="project" value="TreeGrafter"/>
</dbReference>
<dbReference type="GO" id="GO:0048027">
    <property type="term" value="F:mRNA 5'-UTR binding"/>
    <property type="evidence" value="ECO:0007669"/>
    <property type="project" value="UniProtKB-UniRule"/>
</dbReference>
<dbReference type="GO" id="GO:0006402">
    <property type="term" value="P:mRNA catabolic process"/>
    <property type="evidence" value="ECO:0007669"/>
    <property type="project" value="InterPro"/>
</dbReference>
<dbReference type="GO" id="GO:0045947">
    <property type="term" value="P:negative regulation of translational initiation"/>
    <property type="evidence" value="ECO:0007669"/>
    <property type="project" value="UniProtKB-UniRule"/>
</dbReference>
<dbReference type="GO" id="GO:0045948">
    <property type="term" value="P:positive regulation of translational initiation"/>
    <property type="evidence" value="ECO:0007669"/>
    <property type="project" value="UniProtKB-UniRule"/>
</dbReference>
<dbReference type="GO" id="GO:0006109">
    <property type="term" value="P:regulation of carbohydrate metabolic process"/>
    <property type="evidence" value="ECO:0007669"/>
    <property type="project" value="UniProtKB-UniRule"/>
</dbReference>
<dbReference type="FunFam" id="2.60.40.4380:FF:000001">
    <property type="entry name" value="Translational regulator CsrA"/>
    <property type="match status" value="1"/>
</dbReference>
<dbReference type="Gene3D" id="2.60.40.4380">
    <property type="entry name" value="Translational regulator CsrA"/>
    <property type="match status" value="1"/>
</dbReference>
<dbReference type="HAMAP" id="MF_00167">
    <property type="entry name" value="CsrA"/>
    <property type="match status" value="1"/>
</dbReference>
<dbReference type="InterPro" id="IPR003751">
    <property type="entry name" value="CsrA"/>
</dbReference>
<dbReference type="InterPro" id="IPR036107">
    <property type="entry name" value="CsrA_sf"/>
</dbReference>
<dbReference type="NCBIfam" id="TIGR00202">
    <property type="entry name" value="csrA"/>
    <property type="match status" value="1"/>
</dbReference>
<dbReference type="NCBIfam" id="NF002469">
    <property type="entry name" value="PRK01712.1"/>
    <property type="match status" value="1"/>
</dbReference>
<dbReference type="PANTHER" id="PTHR34984">
    <property type="entry name" value="CARBON STORAGE REGULATOR"/>
    <property type="match status" value="1"/>
</dbReference>
<dbReference type="PANTHER" id="PTHR34984:SF1">
    <property type="entry name" value="CARBON STORAGE REGULATOR"/>
    <property type="match status" value="1"/>
</dbReference>
<dbReference type="Pfam" id="PF02599">
    <property type="entry name" value="CsrA"/>
    <property type="match status" value="1"/>
</dbReference>
<dbReference type="SUPFAM" id="SSF117130">
    <property type="entry name" value="CsrA-like"/>
    <property type="match status" value="1"/>
</dbReference>